<gene>
    <name type="ordered locus">Mmwyl1_3801</name>
</gene>
<evidence type="ECO:0000255" key="1">
    <source>
        <dbReference type="HAMAP-Rule" id="MF_01656"/>
    </source>
</evidence>
<proteinExistence type="inferred from homology"/>
<dbReference type="EC" id="4.1.3.39" evidence="1"/>
<dbReference type="EMBL" id="CP000749">
    <property type="protein sequence ID" value="ABR72700.1"/>
    <property type="molecule type" value="Genomic_DNA"/>
</dbReference>
<dbReference type="SMR" id="A6W1X1"/>
<dbReference type="STRING" id="400668.Mmwyl1_3801"/>
<dbReference type="KEGG" id="mmw:Mmwyl1_3801"/>
<dbReference type="eggNOG" id="COG0119">
    <property type="taxonomic scope" value="Bacteria"/>
</dbReference>
<dbReference type="HOGENOM" id="CLU_049173_0_0_6"/>
<dbReference type="GO" id="GO:0003852">
    <property type="term" value="F:2-isopropylmalate synthase activity"/>
    <property type="evidence" value="ECO:0007669"/>
    <property type="project" value="TreeGrafter"/>
</dbReference>
<dbReference type="GO" id="GO:0008701">
    <property type="term" value="F:4-hydroxy-2-oxovalerate aldolase activity"/>
    <property type="evidence" value="ECO:0007669"/>
    <property type="project" value="UniProtKB-UniRule"/>
</dbReference>
<dbReference type="GO" id="GO:0030145">
    <property type="term" value="F:manganese ion binding"/>
    <property type="evidence" value="ECO:0007669"/>
    <property type="project" value="UniProtKB-UniRule"/>
</dbReference>
<dbReference type="GO" id="GO:0009056">
    <property type="term" value="P:catabolic process"/>
    <property type="evidence" value="ECO:0007669"/>
    <property type="project" value="UniProtKB-KW"/>
</dbReference>
<dbReference type="GO" id="GO:0009098">
    <property type="term" value="P:L-leucine biosynthetic process"/>
    <property type="evidence" value="ECO:0007669"/>
    <property type="project" value="TreeGrafter"/>
</dbReference>
<dbReference type="CDD" id="cd07943">
    <property type="entry name" value="DRE_TIM_HOA"/>
    <property type="match status" value="1"/>
</dbReference>
<dbReference type="Gene3D" id="1.10.8.60">
    <property type="match status" value="1"/>
</dbReference>
<dbReference type="Gene3D" id="3.20.20.70">
    <property type="entry name" value="Aldolase class I"/>
    <property type="match status" value="1"/>
</dbReference>
<dbReference type="HAMAP" id="MF_01656">
    <property type="entry name" value="HOA"/>
    <property type="match status" value="1"/>
</dbReference>
<dbReference type="InterPro" id="IPR050073">
    <property type="entry name" value="2-IPM_HCS-like"/>
</dbReference>
<dbReference type="InterPro" id="IPR017629">
    <property type="entry name" value="4OH_2_O-val_aldolase"/>
</dbReference>
<dbReference type="InterPro" id="IPR013785">
    <property type="entry name" value="Aldolase_TIM"/>
</dbReference>
<dbReference type="InterPro" id="IPR012425">
    <property type="entry name" value="DmpG_comm"/>
</dbReference>
<dbReference type="InterPro" id="IPR035685">
    <property type="entry name" value="DRE_TIM_HOA"/>
</dbReference>
<dbReference type="InterPro" id="IPR000891">
    <property type="entry name" value="PYR_CT"/>
</dbReference>
<dbReference type="NCBIfam" id="TIGR03217">
    <property type="entry name" value="4OH_2_O_val_ald"/>
    <property type="match status" value="1"/>
</dbReference>
<dbReference type="NCBIfam" id="NF006049">
    <property type="entry name" value="PRK08195.1"/>
    <property type="match status" value="1"/>
</dbReference>
<dbReference type="PANTHER" id="PTHR10277:SF9">
    <property type="entry name" value="2-ISOPROPYLMALATE SYNTHASE 1, CHLOROPLASTIC-RELATED"/>
    <property type="match status" value="1"/>
</dbReference>
<dbReference type="PANTHER" id="PTHR10277">
    <property type="entry name" value="HOMOCITRATE SYNTHASE-RELATED"/>
    <property type="match status" value="1"/>
</dbReference>
<dbReference type="Pfam" id="PF07836">
    <property type="entry name" value="DmpG_comm"/>
    <property type="match status" value="1"/>
</dbReference>
<dbReference type="Pfam" id="PF00682">
    <property type="entry name" value="HMGL-like"/>
    <property type="match status" value="1"/>
</dbReference>
<dbReference type="SUPFAM" id="SSF51569">
    <property type="entry name" value="Aldolase"/>
    <property type="match status" value="1"/>
</dbReference>
<dbReference type="SUPFAM" id="SSF89000">
    <property type="entry name" value="post-HMGL domain-like"/>
    <property type="match status" value="1"/>
</dbReference>
<dbReference type="PROSITE" id="PS50991">
    <property type="entry name" value="PYR_CT"/>
    <property type="match status" value="1"/>
</dbReference>
<sequence>MKMNEKVILHDMSLRDGMHAKQHQISINQMISAATAMDEAGIPLIEVTHGDGLGGASLNYGFPAHSDEEYLSAVIPKMKQAKVSALLLPGIGTVDHLNMAKDLGVSTIRVATHCTEADISQQHIDHASKLGLDTVGFLMMAHMASVDKIVEQAKLMVSYGANCVYCTDSAGYMLPDEVSLKISALRDTLPSSIDIGFHGHHNLALGVANSVAAIQSGARRIDGSVAGLGAGAGNTPLEVLVAVMNRMEIQSGIDLYKIMDIAEDIIVPMMDQPIRVDRDSLTLGYAGVYSSFLLFAKRAEAKYGISARDVLVELGKRGTVGGQEDMIEDLALSMSKLCK</sequence>
<feature type="chain" id="PRO_0000387839" description="4-hydroxy-2-oxovalerate aldolase">
    <location>
        <begin position="1"/>
        <end position="339"/>
    </location>
</feature>
<feature type="domain" description="Pyruvate carboxyltransferase" evidence="1">
    <location>
        <begin position="7"/>
        <end position="259"/>
    </location>
</feature>
<feature type="active site" description="Proton acceptor" evidence="1">
    <location>
        <position position="19"/>
    </location>
</feature>
<feature type="binding site" evidence="1">
    <location>
        <begin position="15"/>
        <end position="16"/>
    </location>
    <ligand>
        <name>substrate</name>
    </ligand>
</feature>
<feature type="binding site" evidence="1">
    <location>
        <position position="16"/>
    </location>
    <ligand>
        <name>Mn(2+)</name>
        <dbReference type="ChEBI" id="CHEBI:29035"/>
    </ligand>
</feature>
<feature type="binding site" evidence="1">
    <location>
        <position position="169"/>
    </location>
    <ligand>
        <name>substrate</name>
    </ligand>
</feature>
<feature type="binding site" evidence="1">
    <location>
        <position position="198"/>
    </location>
    <ligand>
        <name>Mn(2+)</name>
        <dbReference type="ChEBI" id="CHEBI:29035"/>
    </ligand>
</feature>
<feature type="binding site" evidence="1">
    <location>
        <position position="198"/>
    </location>
    <ligand>
        <name>substrate</name>
    </ligand>
</feature>
<feature type="binding site" evidence="1">
    <location>
        <position position="200"/>
    </location>
    <ligand>
        <name>Mn(2+)</name>
        <dbReference type="ChEBI" id="CHEBI:29035"/>
    </ligand>
</feature>
<feature type="binding site" evidence="1">
    <location>
        <position position="289"/>
    </location>
    <ligand>
        <name>substrate</name>
    </ligand>
</feature>
<feature type="site" description="Transition state stabilizer" evidence="1">
    <location>
        <position position="15"/>
    </location>
</feature>
<reference key="1">
    <citation type="submission" date="2007-06" db="EMBL/GenBank/DDBJ databases">
        <title>Complete sequence of Marinomonas sp. MWYL1.</title>
        <authorList>
            <consortium name="US DOE Joint Genome Institute"/>
            <person name="Copeland A."/>
            <person name="Lucas S."/>
            <person name="Lapidus A."/>
            <person name="Barry K."/>
            <person name="Glavina del Rio T."/>
            <person name="Dalin E."/>
            <person name="Tice H."/>
            <person name="Pitluck S."/>
            <person name="Kiss H."/>
            <person name="Brettin T."/>
            <person name="Bruce D."/>
            <person name="Detter J.C."/>
            <person name="Han C."/>
            <person name="Schmutz J."/>
            <person name="Larimer F."/>
            <person name="Land M."/>
            <person name="Hauser L."/>
            <person name="Kyrpides N."/>
            <person name="Kim E."/>
            <person name="Johnston A.W.B."/>
            <person name="Todd J.D."/>
            <person name="Rogers R."/>
            <person name="Wexler M."/>
            <person name="Bond P.L."/>
            <person name="Li Y."/>
            <person name="Richardson P."/>
        </authorList>
    </citation>
    <scope>NUCLEOTIDE SEQUENCE [LARGE SCALE GENOMIC DNA]</scope>
    <source>
        <strain>MWYL1</strain>
    </source>
</reference>
<keyword id="KW-0058">Aromatic hydrocarbons catabolism</keyword>
<keyword id="KW-0456">Lyase</keyword>
<keyword id="KW-0464">Manganese</keyword>
<keyword id="KW-0479">Metal-binding</keyword>
<accession>A6W1X1</accession>
<organism>
    <name type="scientific">Marinomonas sp. (strain MWYL1)</name>
    <dbReference type="NCBI Taxonomy" id="400668"/>
    <lineage>
        <taxon>Bacteria</taxon>
        <taxon>Pseudomonadati</taxon>
        <taxon>Pseudomonadota</taxon>
        <taxon>Gammaproteobacteria</taxon>
        <taxon>Oceanospirillales</taxon>
        <taxon>Oceanospirillaceae</taxon>
        <taxon>Marinomonas</taxon>
    </lineage>
</organism>
<protein>
    <recommendedName>
        <fullName evidence="1">4-hydroxy-2-oxovalerate aldolase</fullName>
        <shortName evidence="1">HOA</shortName>
        <ecNumber evidence="1">4.1.3.39</ecNumber>
    </recommendedName>
    <alternativeName>
        <fullName evidence="1">4-hydroxy-2-keto-pentanoic acid aldolase</fullName>
    </alternativeName>
    <alternativeName>
        <fullName evidence="1">4-hydroxy-2-oxopentanoate aldolase</fullName>
    </alternativeName>
</protein>
<comment type="catalytic activity">
    <reaction evidence="1">
        <text>(S)-4-hydroxy-2-oxopentanoate = acetaldehyde + pyruvate</text>
        <dbReference type="Rhea" id="RHEA:22624"/>
        <dbReference type="ChEBI" id="CHEBI:15343"/>
        <dbReference type="ChEBI" id="CHEBI:15361"/>
        <dbReference type="ChEBI" id="CHEBI:73143"/>
        <dbReference type="EC" id="4.1.3.39"/>
    </reaction>
</comment>
<comment type="similarity">
    <text evidence="1">Belongs to the 4-hydroxy-2-oxovalerate aldolase family.</text>
</comment>
<name>HOA_MARMS</name>